<evidence type="ECO:0000250" key="1">
    <source>
        <dbReference type="UniProtKB" id="P95827"/>
    </source>
</evidence>
<evidence type="ECO:0000255" key="2"/>
<evidence type="ECO:0000305" key="3"/>
<evidence type="ECO:0000312" key="4">
    <source>
        <dbReference type="EMBL" id="AAR83188.1"/>
    </source>
</evidence>
<evidence type="ECO:0000312" key="5">
    <source>
        <dbReference type="EMBL" id="AAT87301.1"/>
    </source>
</evidence>
<name>MEFA_STRP6</name>
<feature type="chain" id="PRO_0000408963" description="Macrolide efflux protein A">
    <location>
        <begin position="1"/>
        <end position="405"/>
    </location>
</feature>
<feature type="transmembrane region" description="Helical" evidence="2">
    <location>
        <begin position="14"/>
        <end position="34"/>
    </location>
</feature>
<feature type="transmembrane region" description="Helical" evidence="2">
    <location>
        <begin position="48"/>
        <end position="68"/>
    </location>
</feature>
<feature type="transmembrane region" description="Helical" evidence="2">
    <location>
        <begin position="76"/>
        <end position="98"/>
    </location>
</feature>
<feature type="transmembrane region" description="Helical" evidence="2">
    <location>
        <begin position="145"/>
        <end position="165"/>
    </location>
</feature>
<feature type="transmembrane region" description="Helical" evidence="2">
    <location>
        <begin position="168"/>
        <end position="188"/>
    </location>
</feature>
<feature type="transmembrane region" description="Helical" evidence="2">
    <location>
        <begin position="222"/>
        <end position="242"/>
    </location>
</feature>
<feature type="transmembrane region" description="Helical" evidence="2">
    <location>
        <begin position="259"/>
        <end position="279"/>
    </location>
</feature>
<feature type="transmembrane region" description="Helical" evidence="2">
    <location>
        <begin position="285"/>
        <end position="305"/>
    </location>
</feature>
<feature type="transmembrane region" description="Helical" evidence="2">
    <location>
        <begin position="310"/>
        <end position="330"/>
    </location>
</feature>
<feature type="transmembrane region" description="Helical" evidence="2">
    <location>
        <begin position="350"/>
        <end position="370"/>
    </location>
</feature>
<feature type="transmembrane region" description="Helical" evidence="2">
    <location>
        <begin position="373"/>
        <end position="393"/>
    </location>
</feature>
<sequence>MEKYNNWKLKFYTIWAGQAVSLITSAILQMAIIFYLTEKTGSAMVLSMASLLGFLPYAVFGPAIGVLVDRHDRKKIMIGADLIIAAAGSVLTIVAFYMELPVWMVMIVLFIRSIGTAFHTPALNAVTPLLVPEEQLTKCAGYSQSLQSISYIVSPAVAALLYSVWELNAIIAIDVLGAVIASITVAIVRIPKLGDRVQSLDPNFIREMQEGMAVLRQNKGLFALLLVGTLYMFVYMPINALFPLISMDYFNGTPVHISITEISFASGMLIGGLLLGLFGNYQKRILLITASIFMMGISLTISGLLPQSGFFIFVVCCAIMGLSVPFYSGVQTALFQEKIKPEYLGRVFSLTGSIMSLAMPIGLILSALFADRIGVNHWFLLSGTLIICIAIVCPMINEIRKLDLK</sequence>
<gene>
    <name evidence="4" type="primary">mefA</name>
    <name type="ordered locus">M6_Spy1166</name>
</gene>
<accession>Q5XBB2</accession>
<protein>
    <recommendedName>
        <fullName evidence="1">Macrolide efflux protein A</fullName>
    </recommendedName>
</protein>
<reference evidence="4" key="1">
    <citation type="journal article" date="2003" name="J. Infect. Dis.">
        <title>Structure and distribution of an unusual chimeric genetic element encoding macrolide resistance in phylogenetically diverse clones of group A Streptococcus.</title>
        <authorList>
            <person name="Banks D.J."/>
            <person name="Porcella S.F."/>
            <person name="Barbian K.D."/>
            <person name="Martin J.M."/>
            <person name="Musser J.M."/>
        </authorList>
    </citation>
    <scope>NUCLEOTIDE SEQUENCE [GENOMIC DNA]</scope>
    <source>
        <strain>ATCC BAA-946 / MGAS10394</strain>
    </source>
</reference>
<reference evidence="5" key="2">
    <citation type="journal article" date="2004" name="J. Infect. Dis.">
        <title>Progress toward characterization of the group A Streptococcus metagenome: complete genome sequence of a macrolide-resistant serotype M6 strain.</title>
        <authorList>
            <person name="Banks D.J."/>
            <person name="Porcella S.F."/>
            <person name="Barbian K.D."/>
            <person name="Beres S.B."/>
            <person name="Philips L.E."/>
            <person name="Voyich J.M."/>
            <person name="DeLeo F.R."/>
            <person name="Martin J.M."/>
            <person name="Somerville G.A."/>
            <person name="Musser J.M."/>
        </authorList>
    </citation>
    <scope>NUCLEOTIDE SEQUENCE [LARGE SCALE GENOMIC DNA]</scope>
    <source>
        <strain>ATCC BAA-946 / MGAS10394</strain>
    </source>
</reference>
<comment type="function">
    <text evidence="1">Confers resistance to 14-membered macrolides including erythromycin and to 15-membered macrolides but not to 16-membered macrolides, lincosamides or analogs of streptogramin B. May function as an efflux pump to regulate intracellular macrolide levels (By similarity).</text>
</comment>
<comment type="subcellular location">
    <subcellularLocation>
        <location evidence="2">Cell membrane</location>
        <topology evidence="2">Multi-pass membrane protein</topology>
    </subcellularLocation>
</comment>
<comment type="similarity">
    <text evidence="3">Belongs to the major facilitator superfamily. Drug:H(+) antiporter-3 (DHA3) (TC 2.A.1.21) family.</text>
</comment>
<dbReference type="EMBL" id="AY445042">
    <property type="protein sequence ID" value="AAR83188.1"/>
    <property type="molecule type" value="Genomic_DNA"/>
</dbReference>
<dbReference type="EMBL" id="CP000003">
    <property type="protein sequence ID" value="AAT87301.1"/>
    <property type="molecule type" value="Genomic_DNA"/>
</dbReference>
<dbReference type="SMR" id="Q5XBB2"/>
<dbReference type="KEGG" id="spa:M6_Spy1166"/>
<dbReference type="HOGENOM" id="CLU_034180_16_0_9"/>
<dbReference type="Proteomes" id="UP000001167">
    <property type="component" value="Chromosome"/>
</dbReference>
<dbReference type="GO" id="GO:0005886">
    <property type="term" value="C:plasma membrane"/>
    <property type="evidence" value="ECO:0007669"/>
    <property type="project" value="UniProtKB-SubCell"/>
</dbReference>
<dbReference type="GO" id="GO:0022857">
    <property type="term" value="F:transmembrane transporter activity"/>
    <property type="evidence" value="ECO:0007669"/>
    <property type="project" value="InterPro"/>
</dbReference>
<dbReference type="GO" id="GO:0046677">
    <property type="term" value="P:response to antibiotic"/>
    <property type="evidence" value="ECO:0007669"/>
    <property type="project" value="UniProtKB-KW"/>
</dbReference>
<dbReference type="CDD" id="cd06173">
    <property type="entry name" value="MFS_MefA_like"/>
    <property type="match status" value="1"/>
</dbReference>
<dbReference type="Gene3D" id="1.20.1250.20">
    <property type="entry name" value="MFS general substrate transporter like domains"/>
    <property type="match status" value="1"/>
</dbReference>
<dbReference type="InterPro" id="IPR004751">
    <property type="entry name" value="Drug_antiport"/>
</dbReference>
<dbReference type="InterPro" id="IPR020846">
    <property type="entry name" value="MFS_dom"/>
</dbReference>
<dbReference type="InterPro" id="IPR036259">
    <property type="entry name" value="MFS_trans_sf"/>
</dbReference>
<dbReference type="InterPro" id="IPR010290">
    <property type="entry name" value="TM_effector"/>
</dbReference>
<dbReference type="NCBIfam" id="TIGR00900">
    <property type="entry name" value="2A0121"/>
    <property type="match status" value="1"/>
</dbReference>
<dbReference type="NCBIfam" id="NF000245">
    <property type="entry name" value="macrolide_MefA"/>
    <property type="match status" value="1"/>
</dbReference>
<dbReference type="PANTHER" id="PTHR43266:SF10">
    <property type="entry name" value="BACILYSIN EXPORTER BACE-RELATED"/>
    <property type="match status" value="1"/>
</dbReference>
<dbReference type="PANTHER" id="PTHR43266">
    <property type="entry name" value="MACROLIDE-EFFLUX PROTEIN"/>
    <property type="match status" value="1"/>
</dbReference>
<dbReference type="Pfam" id="PF05977">
    <property type="entry name" value="MFS_3"/>
    <property type="match status" value="1"/>
</dbReference>
<dbReference type="SUPFAM" id="SSF103473">
    <property type="entry name" value="MFS general substrate transporter"/>
    <property type="match status" value="1"/>
</dbReference>
<dbReference type="PROSITE" id="PS50850">
    <property type="entry name" value="MFS"/>
    <property type="match status" value="1"/>
</dbReference>
<keyword id="KW-0046">Antibiotic resistance</keyword>
<keyword id="KW-1003">Cell membrane</keyword>
<keyword id="KW-0472">Membrane</keyword>
<keyword id="KW-0812">Transmembrane</keyword>
<keyword id="KW-1133">Transmembrane helix</keyword>
<keyword id="KW-0813">Transport</keyword>
<organism>
    <name type="scientific">Streptococcus pyogenes serotype M6 (strain ATCC BAA-946 / MGAS10394)</name>
    <dbReference type="NCBI Taxonomy" id="286636"/>
    <lineage>
        <taxon>Bacteria</taxon>
        <taxon>Bacillati</taxon>
        <taxon>Bacillota</taxon>
        <taxon>Bacilli</taxon>
        <taxon>Lactobacillales</taxon>
        <taxon>Streptococcaceae</taxon>
        <taxon>Streptococcus</taxon>
    </lineage>
</organism>
<proteinExistence type="inferred from homology"/>